<evidence type="ECO:0000255" key="1">
    <source>
        <dbReference type="HAMAP-Rule" id="MF_03147"/>
    </source>
</evidence>
<protein>
    <recommendedName>
        <fullName evidence="1">Glutamyl-tRNA(Gln) amidotransferase subunit B, mitochondrial</fullName>
        <shortName evidence="1">Glu-AdT subunit B</shortName>
        <ecNumber evidence="1">6.3.5.-</ecNumber>
    </recommendedName>
</protein>
<feature type="transit peptide" description="Mitochondrion" evidence="1">
    <location>
        <begin position="1"/>
        <end position="55"/>
    </location>
</feature>
<feature type="chain" id="PRO_0000413247" description="Glutamyl-tRNA(Gln) amidotransferase subunit B, mitochondrial">
    <location>
        <begin position="56"/>
        <end position="601"/>
    </location>
</feature>
<gene>
    <name type="ORF">An02g07260</name>
</gene>
<dbReference type="EC" id="6.3.5.-" evidence="1"/>
<dbReference type="EMBL" id="AM270016">
    <property type="protein sequence ID" value="CAK37690.1"/>
    <property type="molecule type" value="Genomic_DNA"/>
</dbReference>
<dbReference type="RefSeq" id="XP_001399860.2">
    <property type="nucleotide sequence ID" value="XM_001399823.2"/>
</dbReference>
<dbReference type="EnsemblFungi" id="CAK37690">
    <property type="protein sequence ID" value="CAK37690"/>
    <property type="gene ID" value="An02g07260"/>
</dbReference>
<dbReference type="GeneID" id="4979215"/>
<dbReference type="KEGG" id="ang:An02g07260"/>
<dbReference type="VEuPathDB" id="FungiDB:An02g07260"/>
<dbReference type="HOGENOM" id="CLU_019240_4_1_1"/>
<dbReference type="Proteomes" id="UP000006706">
    <property type="component" value="Chromosome 4R"/>
</dbReference>
<dbReference type="GO" id="GO:0030956">
    <property type="term" value="C:glutamyl-tRNA(Gln) amidotransferase complex"/>
    <property type="evidence" value="ECO:0007669"/>
    <property type="project" value="UniProtKB-UniRule"/>
</dbReference>
<dbReference type="GO" id="GO:0005739">
    <property type="term" value="C:mitochondrion"/>
    <property type="evidence" value="ECO:0007669"/>
    <property type="project" value="UniProtKB-SubCell"/>
</dbReference>
<dbReference type="GO" id="GO:0005524">
    <property type="term" value="F:ATP binding"/>
    <property type="evidence" value="ECO:0007669"/>
    <property type="project" value="UniProtKB-KW"/>
</dbReference>
<dbReference type="GO" id="GO:0050567">
    <property type="term" value="F:glutaminyl-tRNA synthase (glutamine-hydrolyzing) activity"/>
    <property type="evidence" value="ECO:0007669"/>
    <property type="project" value="UniProtKB-UniRule"/>
</dbReference>
<dbReference type="GO" id="GO:0070681">
    <property type="term" value="P:glutaminyl-tRNAGln biosynthesis via transamidation"/>
    <property type="evidence" value="ECO:0007669"/>
    <property type="project" value="UniProtKB-UniRule"/>
</dbReference>
<dbReference type="GO" id="GO:0032543">
    <property type="term" value="P:mitochondrial translation"/>
    <property type="evidence" value="ECO:0007669"/>
    <property type="project" value="UniProtKB-UniRule"/>
</dbReference>
<dbReference type="Gene3D" id="1.10.10.410">
    <property type="match status" value="1"/>
</dbReference>
<dbReference type="HAMAP" id="MF_00121">
    <property type="entry name" value="GatB"/>
    <property type="match status" value="1"/>
</dbReference>
<dbReference type="InterPro" id="IPR017959">
    <property type="entry name" value="Asn/Gln-tRNA_amidoTrfase_suB/E"/>
</dbReference>
<dbReference type="InterPro" id="IPR006075">
    <property type="entry name" value="Asn/Gln-tRNA_Trfase_suB/E_cat"/>
</dbReference>
<dbReference type="InterPro" id="IPR018027">
    <property type="entry name" value="Asn/Gln_amidotransferase"/>
</dbReference>
<dbReference type="InterPro" id="IPR003789">
    <property type="entry name" value="Asn/Gln_tRNA_amidoTrase-B-like"/>
</dbReference>
<dbReference type="InterPro" id="IPR004413">
    <property type="entry name" value="GatB"/>
</dbReference>
<dbReference type="InterPro" id="IPR023168">
    <property type="entry name" value="GatB_Yqey_C_2"/>
</dbReference>
<dbReference type="InterPro" id="IPR017958">
    <property type="entry name" value="Gln-tRNA_amidoTrfase_suB_CS"/>
</dbReference>
<dbReference type="InterPro" id="IPR014746">
    <property type="entry name" value="Gln_synth/guanido_kin_cat_dom"/>
</dbReference>
<dbReference type="NCBIfam" id="TIGR00133">
    <property type="entry name" value="gatB"/>
    <property type="match status" value="1"/>
</dbReference>
<dbReference type="NCBIfam" id="NF004012">
    <property type="entry name" value="PRK05477.1-2"/>
    <property type="match status" value="1"/>
</dbReference>
<dbReference type="PANTHER" id="PTHR11659">
    <property type="entry name" value="GLUTAMYL-TRNA GLN AMIDOTRANSFERASE SUBUNIT B MITOCHONDRIAL AND PROKARYOTIC PET112-RELATED"/>
    <property type="match status" value="1"/>
</dbReference>
<dbReference type="PANTHER" id="PTHR11659:SF0">
    <property type="entry name" value="GLUTAMYL-TRNA(GLN) AMIDOTRANSFERASE SUBUNIT B, MITOCHONDRIAL"/>
    <property type="match status" value="1"/>
</dbReference>
<dbReference type="Pfam" id="PF02934">
    <property type="entry name" value="GatB_N"/>
    <property type="match status" value="1"/>
</dbReference>
<dbReference type="Pfam" id="PF02637">
    <property type="entry name" value="GatB_Yqey"/>
    <property type="match status" value="1"/>
</dbReference>
<dbReference type="SMART" id="SM00845">
    <property type="entry name" value="GatB_Yqey"/>
    <property type="match status" value="1"/>
</dbReference>
<dbReference type="SUPFAM" id="SSF89095">
    <property type="entry name" value="GatB/YqeY motif"/>
    <property type="match status" value="1"/>
</dbReference>
<dbReference type="SUPFAM" id="SSF55931">
    <property type="entry name" value="Glutamine synthetase/guanido kinase"/>
    <property type="match status" value="1"/>
</dbReference>
<dbReference type="PROSITE" id="PS01234">
    <property type="entry name" value="GATB"/>
    <property type="match status" value="1"/>
</dbReference>
<reference key="1">
    <citation type="journal article" date="2007" name="Nat. Biotechnol.">
        <title>Genome sequencing and analysis of the versatile cell factory Aspergillus niger CBS 513.88.</title>
        <authorList>
            <person name="Pel H.J."/>
            <person name="de Winde J.H."/>
            <person name="Archer D.B."/>
            <person name="Dyer P.S."/>
            <person name="Hofmann G."/>
            <person name="Schaap P.J."/>
            <person name="Turner G."/>
            <person name="de Vries R.P."/>
            <person name="Albang R."/>
            <person name="Albermann K."/>
            <person name="Andersen M.R."/>
            <person name="Bendtsen J.D."/>
            <person name="Benen J.A.E."/>
            <person name="van den Berg M."/>
            <person name="Breestraat S."/>
            <person name="Caddick M.X."/>
            <person name="Contreras R."/>
            <person name="Cornell M."/>
            <person name="Coutinho P.M."/>
            <person name="Danchin E.G.J."/>
            <person name="Debets A.J.M."/>
            <person name="Dekker P."/>
            <person name="van Dijck P.W.M."/>
            <person name="van Dijk A."/>
            <person name="Dijkhuizen L."/>
            <person name="Driessen A.J.M."/>
            <person name="d'Enfert C."/>
            <person name="Geysens S."/>
            <person name="Goosen C."/>
            <person name="Groot G.S.P."/>
            <person name="de Groot P.W.J."/>
            <person name="Guillemette T."/>
            <person name="Henrissat B."/>
            <person name="Herweijer M."/>
            <person name="van den Hombergh J.P.T.W."/>
            <person name="van den Hondel C.A.M.J.J."/>
            <person name="van der Heijden R.T.J.M."/>
            <person name="van der Kaaij R.M."/>
            <person name="Klis F.M."/>
            <person name="Kools H.J."/>
            <person name="Kubicek C.P."/>
            <person name="van Kuyk P.A."/>
            <person name="Lauber J."/>
            <person name="Lu X."/>
            <person name="van der Maarel M.J.E.C."/>
            <person name="Meulenberg R."/>
            <person name="Menke H."/>
            <person name="Mortimer M.A."/>
            <person name="Nielsen J."/>
            <person name="Oliver S.G."/>
            <person name="Olsthoorn M."/>
            <person name="Pal K."/>
            <person name="van Peij N.N.M.E."/>
            <person name="Ram A.F.J."/>
            <person name="Rinas U."/>
            <person name="Roubos J.A."/>
            <person name="Sagt C.M.J."/>
            <person name="Schmoll M."/>
            <person name="Sun J."/>
            <person name="Ussery D."/>
            <person name="Varga J."/>
            <person name="Vervecken W."/>
            <person name="van de Vondervoort P.J.J."/>
            <person name="Wedler H."/>
            <person name="Woesten H.A.B."/>
            <person name="Zeng A.-P."/>
            <person name="van Ooyen A.J.J."/>
            <person name="Visser J."/>
            <person name="Stam H."/>
        </authorList>
    </citation>
    <scope>NUCLEOTIDE SEQUENCE [LARGE SCALE GENOMIC DNA]</scope>
    <source>
        <strain>ATCC MYA-4892 / CBS 513.88 / FGSC A1513</strain>
    </source>
</reference>
<proteinExistence type="inferred from homology"/>
<name>GATB_ASPNC</name>
<sequence>MLRPWLRQCPRATRSLACPQCHLPRPQTARRALRPLPALSLSHPIRSLQTTTTESPDRIPLRKQLKQDAKAVKARKRQTRENEEASREKWELTVGIEIHAQLNTESKLFSRASTSSTDLPNSNVALFDLAFPGSQPEFQIATLLPALRAALALNCEIQPVSKFDRKHYFYQDQPAGYQITQYYEPFAKNGYVDLFRHDGIAPEDGDTVRIGIKQVQMEQDTAKSQEYPPSTQLLDFNRVSHPLVEIITMPQIHTPATAAACVRKIQSILQSCNAVTTGMELGGLRADVNVSIRQRGDTAGTHQYGGIGGLGQRTEIKNLSSFKAVEDAIIAEKNRQIAVLESGGVVEGETRGWTIGSTETRKLRGKEGEVDYRYMPDPDLPPLYIGADLVAALRTNLPTSSDALIELLAGPEYGLPIEDAKPLVELEDGARLEYYQEVVDLLRALQSDQDPKAQKGLARVAGNWVLXELGGLWAKAEEAWDAARVPAPTLAALIDQLQRKHITGPTAKQVLAMVFAGDERPIPQLLEEENLLLRPLSREEYVTLAEAAISLNPAMVEQIRQKNQLGKLGWFVGQMMRMGEKGRVEAPRADAILRELILDQR</sequence>
<comment type="function">
    <text evidence="1">Allows the formation of correctly charged Gln-tRNA(Gln) through the transamidation of misacylated Glu-tRNA(Gln) in the mitochondria. The reaction takes place in the presence of glutamine and ATP through an activated gamma-phospho-Glu-tRNA(Gln).</text>
</comment>
<comment type="catalytic activity">
    <reaction evidence="1">
        <text>L-glutamyl-tRNA(Gln) + L-glutamine + ATP + H2O = L-glutaminyl-tRNA(Gln) + L-glutamate + ADP + phosphate + H(+)</text>
        <dbReference type="Rhea" id="RHEA:17521"/>
        <dbReference type="Rhea" id="RHEA-COMP:9681"/>
        <dbReference type="Rhea" id="RHEA-COMP:9684"/>
        <dbReference type="ChEBI" id="CHEBI:15377"/>
        <dbReference type="ChEBI" id="CHEBI:15378"/>
        <dbReference type="ChEBI" id="CHEBI:29985"/>
        <dbReference type="ChEBI" id="CHEBI:30616"/>
        <dbReference type="ChEBI" id="CHEBI:43474"/>
        <dbReference type="ChEBI" id="CHEBI:58359"/>
        <dbReference type="ChEBI" id="CHEBI:78520"/>
        <dbReference type="ChEBI" id="CHEBI:78521"/>
        <dbReference type="ChEBI" id="CHEBI:456216"/>
    </reaction>
</comment>
<comment type="subunit">
    <text evidence="1">Subunit of the heterotrimeric GatCAB amidotransferase (AdT) complex, composed of A, B and C subunits.</text>
</comment>
<comment type="subcellular location">
    <subcellularLocation>
        <location evidence="1">Mitochondrion</location>
    </subcellularLocation>
</comment>
<comment type="similarity">
    <text evidence="1">Belongs to the GatB/GatE family. GatB subfamily.</text>
</comment>
<organism>
    <name type="scientific">Aspergillus niger (strain ATCC MYA-4892 / CBS 513.88 / FGSC A1513)</name>
    <dbReference type="NCBI Taxonomy" id="425011"/>
    <lineage>
        <taxon>Eukaryota</taxon>
        <taxon>Fungi</taxon>
        <taxon>Dikarya</taxon>
        <taxon>Ascomycota</taxon>
        <taxon>Pezizomycotina</taxon>
        <taxon>Eurotiomycetes</taxon>
        <taxon>Eurotiomycetidae</taxon>
        <taxon>Eurotiales</taxon>
        <taxon>Aspergillaceae</taxon>
        <taxon>Aspergillus</taxon>
        <taxon>Aspergillus subgen. Circumdati</taxon>
    </lineage>
</organism>
<accession>A2QDI9</accession>
<keyword id="KW-0067">ATP-binding</keyword>
<keyword id="KW-0436">Ligase</keyword>
<keyword id="KW-0496">Mitochondrion</keyword>
<keyword id="KW-0547">Nucleotide-binding</keyword>
<keyword id="KW-0648">Protein biosynthesis</keyword>
<keyword id="KW-1185">Reference proteome</keyword>
<keyword id="KW-0809">Transit peptide</keyword>